<accession>A8IG16</accession>
<organism>
    <name type="scientific">Azorhizobium caulinodans (strain ATCC 43989 / DSM 5975 / JCM 20966 / LMG 6465 / NBRC 14845 / NCIMB 13405 / ORS 571)</name>
    <dbReference type="NCBI Taxonomy" id="438753"/>
    <lineage>
        <taxon>Bacteria</taxon>
        <taxon>Pseudomonadati</taxon>
        <taxon>Pseudomonadota</taxon>
        <taxon>Alphaproteobacteria</taxon>
        <taxon>Hyphomicrobiales</taxon>
        <taxon>Xanthobacteraceae</taxon>
        <taxon>Azorhizobium</taxon>
    </lineage>
</organism>
<feature type="chain" id="PRO_0000384608" description="Ribosome maturation factor RimP">
    <location>
        <begin position="1"/>
        <end position="291"/>
    </location>
</feature>
<feature type="region of interest" description="Disordered" evidence="2">
    <location>
        <begin position="188"/>
        <end position="291"/>
    </location>
</feature>
<feature type="compositionally biased region" description="Acidic residues" evidence="2">
    <location>
        <begin position="193"/>
        <end position="211"/>
    </location>
</feature>
<feature type="compositionally biased region" description="Basic and acidic residues" evidence="2">
    <location>
        <begin position="212"/>
        <end position="237"/>
    </location>
</feature>
<feature type="compositionally biased region" description="Basic and acidic residues" evidence="2">
    <location>
        <begin position="245"/>
        <end position="254"/>
    </location>
</feature>
<dbReference type="EMBL" id="AP009384">
    <property type="protein sequence ID" value="BAF86015.1"/>
    <property type="status" value="ALT_INIT"/>
    <property type="molecule type" value="Genomic_DNA"/>
</dbReference>
<dbReference type="RefSeq" id="WP_043878680.1">
    <property type="nucleotide sequence ID" value="NC_009937.1"/>
</dbReference>
<dbReference type="SMR" id="A8IG16"/>
<dbReference type="STRING" id="438753.AZC_0017"/>
<dbReference type="KEGG" id="azc:AZC_0017"/>
<dbReference type="eggNOG" id="COG0779">
    <property type="taxonomic scope" value="Bacteria"/>
</dbReference>
<dbReference type="HOGENOM" id="CLU_070525_0_0_5"/>
<dbReference type="Proteomes" id="UP000000270">
    <property type="component" value="Chromosome"/>
</dbReference>
<dbReference type="GO" id="GO:0005829">
    <property type="term" value="C:cytosol"/>
    <property type="evidence" value="ECO:0007669"/>
    <property type="project" value="TreeGrafter"/>
</dbReference>
<dbReference type="GO" id="GO:0000028">
    <property type="term" value="P:ribosomal small subunit assembly"/>
    <property type="evidence" value="ECO:0007669"/>
    <property type="project" value="TreeGrafter"/>
</dbReference>
<dbReference type="GO" id="GO:0006412">
    <property type="term" value="P:translation"/>
    <property type="evidence" value="ECO:0007669"/>
    <property type="project" value="TreeGrafter"/>
</dbReference>
<dbReference type="CDD" id="cd01734">
    <property type="entry name" value="YlxS_C"/>
    <property type="match status" value="1"/>
</dbReference>
<dbReference type="Gene3D" id="2.30.30.180">
    <property type="entry name" value="Ribosome maturation factor RimP, C-terminal domain"/>
    <property type="match status" value="1"/>
</dbReference>
<dbReference type="Gene3D" id="3.30.300.70">
    <property type="entry name" value="RimP-like superfamily, N-terminal"/>
    <property type="match status" value="1"/>
</dbReference>
<dbReference type="HAMAP" id="MF_01077">
    <property type="entry name" value="RimP"/>
    <property type="match status" value="1"/>
</dbReference>
<dbReference type="InterPro" id="IPR003728">
    <property type="entry name" value="Ribosome_maturation_RimP"/>
</dbReference>
<dbReference type="InterPro" id="IPR028998">
    <property type="entry name" value="RimP_C"/>
</dbReference>
<dbReference type="InterPro" id="IPR036847">
    <property type="entry name" value="RimP_C_sf"/>
</dbReference>
<dbReference type="InterPro" id="IPR028989">
    <property type="entry name" value="RimP_N"/>
</dbReference>
<dbReference type="InterPro" id="IPR035956">
    <property type="entry name" value="RimP_N_sf"/>
</dbReference>
<dbReference type="NCBIfam" id="NF000932">
    <property type="entry name" value="PRK00092.2-5"/>
    <property type="match status" value="1"/>
</dbReference>
<dbReference type="PANTHER" id="PTHR33867">
    <property type="entry name" value="RIBOSOME MATURATION FACTOR RIMP"/>
    <property type="match status" value="1"/>
</dbReference>
<dbReference type="PANTHER" id="PTHR33867:SF1">
    <property type="entry name" value="RIBOSOME MATURATION FACTOR RIMP"/>
    <property type="match status" value="1"/>
</dbReference>
<dbReference type="Pfam" id="PF17384">
    <property type="entry name" value="DUF150_C"/>
    <property type="match status" value="1"/>
</dbReference>
<dbReference type="Pfam" id="PF02576">
    <property type="entry name" value="RimP_N"/>
    <property type="match status" value="1"/>
</dbReference>
<dbReference type="SUPFAM" id="SSF74942">
    <property type="entry name" value="YhbC-like, C-terminal domain"/>
    <property type="match status" value="1"/>
</dbReference>
<dbReference type="SUPFAM" id="SSF75420">
    <property type="entry name" value="YhbC-like, N-terminal domain"/>
    <property type="match status" value="1"/>
</dbReference>
<name>RIMP_AZOC5</name>
<proteinExistence type="inferred from homology"/>
<comment type="function">
    <text evidence="1">Required for maturation of 30S ribosomal subunits.</text>
</comment>
<comment type="subcellular location">
    <subcellularLocation>
        <location evidence="1">Cytoplasm</location>
    </subcellularLocation>
</comment>
<comment type="similarity">
    <text evidence="1">Belongs to the RimP family.</text>
</comment>
<comment type="sequence caution" evidence="3">
    <conflict type="erroneous initiation">
        <sequence resource="EMBL-CDS" id="BAF86015"/>
    </conflict>
</comment>
<protein>
    <recommendedName>
        <fullName evidence="1">Ribosome maturation factor RimP</fullName>
    </recommendedName>
</protein>
<keyword id="KW-0963">Cytoplasm</keyword>
<keyword id="KW-1185">Reference proteome</keyword>
<keyword id="KW-0690">Ribosome biogenesis</keyword>
<gene>
    <name evidence="1" type="primary">rimP</name>
    <name type="ordered locus">AZC_0017</name>
</gene>
<sequence>MNETVEALDPNEPRLITESGVAARIAAIVTPVLADLNLRLVRVKVTARDGGTCQIMAERPDGSMTIDDCEAASRAISPVLDVEDPITGAYRLEISSPGIDRPLVRLTDFDRWAGHEVKVEMAVPVDGRKRFRGILIGTRAELAVVKRTDAPKGEEPEVSLPVADIGEAKLVLTDALITEALRRAKAAERGLGEDEEFEDDADEVFEGDEADEKAAKDAANAERANAKKAADKAEKRAGKVARKAAKSEKAEKSQAKTGKARLSKAEVDDLAVTNPASRALRGGKPKAKETH</sequence>
<evidence type="ECO:0000255" key="1">
    <source>
        <dbReference type="HAMAP-Rule" id="MF_01077"/>
    </source>
</evidence>
<evidence type="ECO:0000256" key="2">
    <source>
        <dbReference type="SAM" id="MobiDB-lite"/>
    </source>
</evidence>
<evidence type="ECO:0000305" key="3"/>
<reference key="1">
    <citation type="submission" date="2007-04" db="EMBL/GenBank/DDBJ databases">
        <title>Complete genome sequence of the nitrogen-fixing bacterium Azorhizobium caulinodans ORS571.</title>
        <authorList>
            <person name="Lee K.B."/>
            <person name="Backer P.D."/>
            <person name="Aono T."/>
            <person name="Liu C.T."/>
            <person name="Suzuki S."/>
            <person name="Suzuki T."/>
            <person name="Kaneko T."/>
            <person name="Yamada M."/>
            <person name="Tabata S."/>
            <person name="Kupfer D.M."/>
            <person name="Najar F.Z."/>
            <person name="Wiley G.B."/>
            <person name="Roe B."/>
            <person name="Binnewies T."/>
            <person name="Ussery D."/>
            <person name="Vereecke D."/>
            <person name="Gevers D."/>
            <person name="Holsters M."/>
            <person name="Oyaizu H."/>
        </authorList>
    </citation>
    <scope>NUCLEOTIDE SEQUENCE [LARGE SCALE GENOMIC DNA]</scope>
    <source>
        <strain>ATCC 43989 / DSM 5975 / JCM 20966 / LMG 6465 / NBRC 14845 / NCIMB 13405 / ORS 571</strain>
    </source>
</reference>